<proteinExistence type="inferred from homology"/>
<comment type="function">
    <text evidence="1">Binds to the 23S rRNA.</text>
</comment>
<comment type="subunit">
    <text evidence="1">Part of the 50S ribosomal subunit.</text>
</comment>
<comment type="similarity">
    <text evidence="1">Belongs to the universal ribosomal protein uL15 family.</text>
</comment>
<organism>
    <name type="scientific">Coxiella burnetii (strain CbuG_Q212)</name>
    <name type="common">Coxiella burnetii (strain Q212)</name>
    <dbReference type="NCBI Taxonomy" id="434923"/>
    <lineage>
        <taxon>Bacteria</taxon>
        <taxon>Pseudomonadati</taxon>
        <taxon>Pseudomonadota</taxon>
        <taxon>Gammaproteobacteria</taxon>
        <taxon>Legionellales</taxon>
        <taxon>Coxiellaceae</taxon>
        <taxon>Coxiella</taxon>
    </lineage>
</organism>
<gene>
    <name evidence="1" type="primary">rplO</name>
    <name type="ordered locus">CbuG_1748</name>
</gene>
<protein>
    <recommendedName>
        <fullName evidence="1">Large ribosomal subunit protein uL15</fullName>
    </recommendedName>
    <alternativeName>
        <fullName evidence="3">50S ribosomal protein L15</fullName>
    </alternativeName>
</protein>
<reference key="1">
    <citation type="journal article" date="2009" name="Infect. Immun.">
        <title>Comparative genomics reveal extensive transposon-mediated genomic plasticity and diversity among potential effector proteins within the genus Coxiella.</title>
        <authorList>
            <person name="Beare P.A."/>
            <person name="Unsworth N."/>
            <person name="Andoh M."/>
            <person name="Voth D.E."/>
            <person name="Omsland A."/>
            <person name="Gilk S.D."/>
            <person name="Williams K.P."/>
            <person name="Sobral B.W."/>
            <person name="Kupko J.J. III"/>
            <person name="Porcella S.F."/>
            <person name="Samuel J.E."/>
            <person name="Heinzen R.A."/>
        </authorList>
    </citation>
    <scope>NUCLEOTIDE SEQUENCE [LARGE SCALE GENOMIC DNA]</scope>
    <source>
        <strain>CbuG_Q212</strain>
    </source>
</reference>
<sequence length="143" mass="15285">MQLNDLKPAKGARHQKLRVGRGIGSGKGKTAGRGHKGQHSRAGGYHKVGFEGGQMPLQRRVPKFGFTSRKELISAEVRLGELNKISGDVVDLASLKAANIISRQIKRVKIFAAGKLEKPVTIRGLRVTKGVKAAVEAAGGKIE</sequence>
<keyword id="KW-0687">Ribonucleoprotein</keyword>
<keyword id="KW-0689">Ribosomal protein</keyword>
<keyword id="KW-0694">RNA-binding</keyword>
<keyword id="KW-0699">rRNA-binding</keyword>
<feature type="chain" id="PRO_1000142801" description="Large ribosomal subunit protein uL15">
    <location>
        <begin position="1"/>
        <end position="143"/>
    </location>
</feature>
<feature type="region of interest" description="Disordered" evidence="2">
    <location>
        <begin position="20"/>
        <end position="52"/>
    </location>
</feature>
<feature type="compositionally biased region" description="Basic residues" evidence="2">
    <location>
        <begin position="30"/>
        <end position="39"/>
    </location>
</feature>
<name>RL15_COXB2</name>
<accession>B6J244</accession>
<evidence type="ECO:0000255" key="1">
    <source>
        <dbReference type="HAMAP-Rule" id="MF_01341"/>
    </source>
</evidence>
<evidence type="ECO:0000256" key="2">
    <source>
        <dbReference type="SAM" id="MobiDB-lite"/>
    </source>
</evidence>
<evidence type="ECO:0000305" key="3"/>
<dbReference type="EMBL" id="CP001019">
    <property type="protein sequence ID" value="ACJ19022.1"/>
    <property type="molecule type" value="Genomic_DNA"/>
</dbReference>
<dbReference type="RefSeq" id="WP_010957463.1">
    <property type="nucleotide sequence ID" value="NC_011527.1"/>
</dbReference>
<dbReference type="SMR" id="B6J244"/>
<dbReference type="KEGG" id="cbg:CbuG_1748"/>
<dbReference type="HOGENOM" id="CLU_055188_4_2_6"/>
<dbReference type="GO" id="GO:0022625">
    <property type="term" value="C:cytosolic large ribosomal subunit"/>
    <property type="evidence" value="ECO:0007669"/>
    <property type="project" value="TreeGrafter"/>
</dbReference>
<dbReference type="GO" id="GO:0019843">
    <property type="term" value="F:rRNA binding"/>
    <property type="evidence" value="ECO:0007669"/>
    <property type="project" value="UniProtKB-UniRule"/>
</dbReference>
<dbReference type="GO" id="GO:0003735">
    <property type="term" value="F:structural constituent of ribosome"/>
    <property type="evidence" value="ECO:0007669"/>
    <property type="project" value="InterPro"/>
</dbReference>
<dbReference type="GO" id="GO:0006412">
    <property type="term" value="P:translation"/>
    <property type="evidence" value="ECO:0007669"/>
    <property type="project" value="UniProtKB-UniRule"/>
</dbReference>
<dbReference type="Gene3D" id="3.100.10.10">
    <property type="match status" value="1"/>
</dbReference>
<dbReference type="HAMAP" id="MF_01341">
    <property type="entry name" value="Ribosomal_uL15"/>
    <property type="match status" value="1"/>
</dbReference>
<dbReference type="InterPro" id="IPR030878">
    <property type="entry name" value="Ribosomal_uL15"/>
</dbReference>
<dbReference type="InterPro" id="IPR021131">
    <property type="entry name" value="Ribosomal_uL15/eL18"/>
</dbReference>
<dbReference type="InterPro" id="IPR036227">
    <property type="entry name" value="Ribosomal_uL15/eL18_sf"/>
</dbReference>
<dbReference type="InterPro" id="IPR005749">
    <property type="entry name" value="Ribosomal_uL15_bac-type"/>
</dbReference>
<dbReference type="NCBIfam" id="TIGR01071">
    <property type="entry name" value="rplO_bact"/>
    <property type="match status" value="1"/>
</dbReference>
<dbReference type="PANTHER" id="PTHR12934">
    <property type="entry name" value="50S RIBOSOMAL PROTEIN L15"/>
    <property type="match status" value="1"/>
</dbReference>
<dbReference type="PANTHER" id="PTHR12934:SF11">
    <property type="entry name" value="LARGE RIBOSOMAL SUBUNIT PROTEIN UL15M"/>
    <property type="match status" value="1"/>
</dbReference>
<dbReference type="Pfam" id="PF00828">
    <property type="entry name" value="Ribosomal_L27A"/>
    <property type="match status" value="1"/>
</dbReference>
<dbReference type="SUPFAM" id="SSF52080">
    <property type="entry name" value="Ribosomal proteins L15p and L18e"/>
    <property type="match status" value="1"/>
</dbReference>